<feature type="chain" id="PRO_0000350964" description="Chromatin-remodeling ATPase INO80">
    <location>
        <begin position="1"/>
        <end position="1707"/>
    </location>
</feature>
<feature type="domain" description="DBINO" evidence="7">
    <location>
        <begin position="603"/>
        <end position="728"/>
    </location>
</feature>
<feature type="domain" description="Helicase ATP-binding" evidence="5">
    <location>
        <begin position="853"/>
        <end position="1025"/>
    </location>
</feature>
<feature type="domain" description="Helicase C-terminal" evidence="6">
    <location>
        <begin position="1426"/>
        <end position="1586"/>
    </location>
</feature>
<feature type="region of interest" description="Disordered" evidence="8">
    <location>
        <begin position="1"/>
        <end position="315"/>
    </location>
</feature>
<feature type="region of interest" description="Disordered" evidence="8">
    <location>
        <begin position="398"/>
        <end position="429"/>
    </location>
</feature>
<feature type="region of interest" description="Disordered" evidence="8">
    <location>
        <begin position="454"/>
        <end position="543"/>
    </location>
</feature>
<feature type="region of interest" description="Disordered" evidence="8">
    <location>
        <begin position="673"/>
        <end position="702"/>
    </location>
</feature>
<feature type="region of interest" description="Disordered" evidence="8">
    <location>
        <begin position="729"/>
        <end position="761"/>
    </location>
</feature>
<feature type="region of interest" description="Disordered" evidence="8">
    <location>
        <begin position="1610"/>
        <end position="1707"/>
    </location>
</feature>
<feature type="coiled-coil region" evidence="4">
    <location>
        <begin position="369"/>
        <end position="470"/>
    </location>
</feature>
<feature type="short sequence motif" description="DEAQ box">
    <location>
        <begin position="976"/>
        <end position="979"/>
    </location>
</feature>
<feature type="compositionally biased region" description="Polar residues" evidence="8">
    <location>
        <begin position="15"/>
        <end position="44"/>
    </location>
</feature>
<feature type="compositionally biased region" description="Low complexity" evidence="8">
    <location>
        <begin position="61"/>
        <end position="75"/>
    </location>
</feature>
<feature type="compositionally biased region" description="Basic and acidic residues" evidence="8">
    <location>
        <begin position="78"/>
        <end position="89"/>
    </location>
</feature>
<feature type="compositionally biased region" description="Polar residues" evidence="8">
    <location>
        <begin position="90"/>
        <end position="100"/>
    </location>
</feature>
<feature type="compositionally biased region" description="Basic and acidic residues" evidence="8">
    <location>
        <begin position="101"/>
        <end position="126"/>
    </location>
</feature>
<feature type="compositionally biased region" description="Pro residues" evidence="8">
    <location>
        <begin position="237"/>
        <end position="247"/>
    </location>
</feature>
<feature type="compositionally biased region" description="Low complexity" evidence="8">
    <location>
        <begin position="266"/>
        <end position="281"/>
    </location>
</feature>
<feature type="compositionally biased region" description="Basic residues" evidence="8">
    <location>
        <begin position="505"/>
        <end position="515"/>
    </location>
</feature>
<feature type="compositionally biased region" description="Basic and acidic residues" evidence="8">
    <location>
        <begin position="516"/>
        <end position="526"/>
    </location>
</feature>
<feature type="compositionally biased region" description="Basic and acidic residues" evidence="8">
    <location>
        <begin position="729"/>
        <end position="756"/>
    </location>
</feature>
<feature type="compositionally biased region" description="Basic and acidic residues" evidence="8">
    <location>
        <begin position="1643"/>
        <end position="1656"/>
    </location>
</feature>
<feature type="binding site" evidence="5">
    <location>
        <begin position="866"/>
        <end position="873"/>
    </location>
    <ligand>
        <name>ATP</name>
        <dbReference type="ChEBI" id="CHEBI:30616"/>
    </ligand>
</feature>
<feature type="modified residue" description="Phosphothreonine" evidence="1">
    <location>
        <position position="178"/>
    </location>
</feature>
<evidence type="ECO:0000250" key="1"/>
<evidence type="ECO:0000250" key="2">
    <source>
        <dbReference type="UniProtKB" id="P53115"/>
    </source>
</evidence>
<evidence type="ECO:0000250" key="3">
    <source>
        <dbReference type="UniProtKB" id="Q9ULG1"/>
    </source>
</evidence>
<evidence type="ECO:0000255" key="4"/>
<evidence type="ECO:0000255" key="5">
    <source>
        <dbReference type="PROSITE-ProRule" id="PRU00541"/>
    </source>
</evidence>
<evidence type="ECO:0000255" key="6">
    <source>
        <dbReference type="PROSITE-ProRule" id="PRU00542"/>
    </source>
</evidence>
<evidence type="ECO:0000255" key="7">
    <source>
        <dbReference type="PROSITE-ProRule" id="PRU00746"/>
    </source>
</evidence>
<evidence type="ECO:0000256" key="8">
    <source>
        <dbReference type="SAM" id="MobiDB-lite"/>
    </source>
</evidence>
<evidence type="ECO:0000305" key="9"/>
<comment type="function">
    <text evidence="7">ATPase component of the INO80 complex which remodels chromatin by shifting nucleosomes and is involved in DNA repair.</text>
</comment>
<comment type="catalytic activity">
    <reaction evidence="2">
        <text>ATP + H2O = ADP + phosphate + H(+)</text>
        <dbReference type="Rhea" id="RHEA:13065"/>
        <dbReference type="ChEBI" id="CHEBI:15377"/>
        <dbReference type="ChEBI" id="CHEBI:15378"/>
        <dbReference type="ChEBI" id="CHEBI:30616"/>
        <dbReference type="ChEBI" id="CHEBI:43474"/>
        <dbReference type="ChEBI" id="CHEBI:456216"/>
    </reaction>
</comment>
<comment type="subunit">
    <text evidence="7">Component of the INO80 chromatin-remodeling complex.</text>
</comment>
<comment type="subcellular location">
    <subcellularLocation>
        <location evidence="7">Nucleus</location>
    </subcellularLocation>
</comment>
<comment type="domain">
    <text evidence="3">The DBINO region is involved in binding to DNA.</text>
</comment>
<comment type="similarity">
    <text evidence="9">Belongs to the SNF2/RAD54 helicase family.</text>
</comment>
<proteinExistence type="inferred from homology"/>
<name>INO80_SCLS1</name>
<accession>A7EQA8</accession>
<sequence length="1707" mass="192466">MSTSSSNIPYDVGSPRQQSQTEIRSILNPSTTSTGAHPSFNQYHPPTAAPPLIPSHIPLQSTTPSTLGLSLGTPLYQSERDIGYPRDQKPTSNYYDPTSDSSERRPATAESKWSDREAKTSQRRDSYPYQQNQPPAPSTDGPMNLYNGGYKSPVNSHFPPGSPISHAHPQGRVPPLVTQSPRMPAMESPISRHNGLGGGPELQDKPVIKQEPVPASTPSRPVDPMAFSSILSSAAPEPTPKPQPTPTPIVSKPRKASRQPIPTLKPEPSSAPSSRQSSVAPAPQPPTSRVPAKRKANGETKPTPKPKPFTKDQERDIVILMSKLDGEPEDSDVEFAEEKRLYQTRSLKRKLEVEKIETSKTKQRRTDFTNKMAKRLEKHAKAGEERYREVEGDAAISKVQADEIQTEKERKKDMQRKRRREKTVQNNMEQKEIALAKAQAAQDDQERHKFLRDAQRAEKKAQQTKQILARGDKGPEIRAVSPMEPNMQGGSMSTFTAVDPDSTKKPKRGGARPRKSKEQKQAEKDSAAAAQEAIDKGESPALMPIRDAAEFKDMKPLPSKEGVTKIKLKFKAPAEPVEVKEESPSAPVDQHNTKMYHVVYDQIWKDLARKEVPKVFKLAVDSYSIRASNLKKTAILASKEAKRWQLRTNKGTKDLQARAKRVMREMMSFWKRNEREERDTRRAAEKQEIENAKKAEADREANRQKRKLNFLISQTELYSHFIGKKIKTDEVERSTDHPDVAVPDKADHAKPDHGDLPEGTAPAKVTNFEDLDFDAEDESVLKAAAMANAQNAIQEAQNKARAFNKKDDAPAMDDEGEMNFQNPAGMGDVDIEQPKMLQAQLKEYQLKGLNWLVNLYEQGINGILADEMGLGKTVQSISVMAYLAEKHGIWGPFLVVAPASTLHNWQQEITKFVPRLKVLPYWGTAADRKVLRKFWDRKHITYTEDAPFHVLVTSYQLVVSDVAYFQKMKWQYMILDEAQAIKSSQSSRWKSLLGFHCRNRLLLTGTPIQNNMQELWALLHFIMPSLFDSHDEFSEWFSKDIESHAQSNTKLNEDQLKRLHMILKPFMLRRVKKHVQKELGDKIEEDIFCDLTYRQRAYYSNLRNQISIMDLIEKATIGDDNDTGTLMNLVMQFRKVCNHPDLFERAETTSPLSFSYFAEAGSFLREGSNVTVAYSARNMIEYSLPRLIWREGGRLDLPGHDNEHAGVKAKCLESLFNVWKPENIVDSAKEDGAFSWLRFTNTSVQELSTASRKDVFARAVDLVKRPQTLGRLNIVYDEEEDKNYTPVHSMLQIVNRKDRKPLAEVTNEGYLNKLFNVAKDVWGQSGMSRMEQCGRPSATAPPIEVTCSSRGAVIERQKILFNVPMRRALFGPSPVEEKALITSKVSPLFYPPKPMLPLPTSEKQRFTNIKVPSMRRFVTDSGKLAKLDSLLTKLKEGGHRVLLYFQMTRMIDLMEEYLTYRNYKYLRLDGSTKLEDRRDTVHDFQTRPEIFIFLLSTRAGGLGINLTSADTVIFYDSDWNPTIDSQAMDRAHRLGQTRQVTVYRMITRGTIEERIRKRALQKEEVQKVVMTGGAGGGVDFNTRSKENRTKDIAMWLVDDEEAAEIERKEAEQLRYEAENPTASKKGKGKGKKGKEGGGGSLEDLYHEGEGHFDDGSNRPSGTATPIAVDASKKKGSSSRKSGGGGRSKKAKTAKERLAMADGDVDMA</sequence>
<keyword id="KW-0010">Activator</keyword>
<keyword id="KW-0067">ATP-binding</keyword>
<keyword id="KW-0175">Coiled coil</keyword>
<keyword id="KW-0227">DNA damage</keyword>
<keyword id="KW-0234">DNA repair</keyword>
<keyword id="KW-0238">DNA-binding</keyword>
<keyword id="KW-0378">Hydrolase</keyword>
<keyword id="KW-0547">Nucleotide-binding</keyword>
<keyword id="KW-0539">Nucleus</keyword>
<keyword id="KW-0597">Phosphoprotein</keyword>
<keyword id="KW-1185">Reference proteome</keyword>
<keyword id="KW-0804">Transcription</keyword>
<keyword id="KW-0805">Transcription regulation</keyword>
<gene>
    <name type="primary">INO80</name>
    <name type="ORF">SS1G_07509</name>
</gene>
<reference key="1">
    <citation type="journal article" date="2011" name="PLoS Genet.">
        <title>Genomic analysis of the necrotrophic fungal pathogens Sclerotinia sclerotiorum and Botrytis cinerea.</title>
        <authorList>
            <person name="Amselem J."/>
            <person name="Cuomo C.A."/>
            <person name="van Kan J.A.L."/>
            <person name="Viaud M."/>
            <person name="Benito E.P."/>
            <person name="Couloux A."/>
            <person name="Coutinho P.M."/>
            <person name="de Vries R.P."/>
            <person name="Dyer P.S."/>
            <person name="Fillinger S."/>
            <person name="Fournier E."/>
            <person name="Gout L."/>
            <person name="Hahn M."/>
            <person name="Kohn L."/>
            <person name="Lapalu N."/>
            <person name="Plummer K.M."/>
            <person name="Pradier J.-M."/>
            <person name="Quevillon E."/>
            <person name="Sharon A."/>
            <person name="Simon A."/>
            <person name="ten Have A."/>
            <person name="Tudzynski B."/>
            <person name="Tudzynski P."/>
            <person name="Wincker P."/>
            <person name="Andrew M."/>
            <person name="Anthouard V."/>
            <person name="Beever R.E."/>
            <person name="Beffa R."/>
            <person name="Benoit I."/>
            <person name="Bouzid O."/>
            <person name="Brault B."/>
            <person name="Chen Z."/>
            <person name="Choquer M."/>
            <person name="Collemare J."/>
            <person name="Cotton P."/>
            <person name="Danchin E.G."/>
            <person name="Da Silva C."/>
            <person name="Gautier A."/>
            <person name="Giraud C."/>
            <person name="Giraud T."/>
            <person name="Gonzalez C."/>
            <person name="Grossetete S."/>
            <person name="Gueldener U."/>
            <person name="Henrissat B."/>
            <person name="Howlett B.J."/>
            <person name="Kodira C."/>
            <person name="Kretschmer M."/>
            <person name="Lappartient A."/>
            <person name="Leroch M."/>
            <person name="Levis C."/>
            <person name="Mauceli E."/>
            <person name="Neuveglise C."/>
            <person name="Oeser B."/>
            <person name="Pearson M."/>
            <person name="Poulain J."/>
            <person name="Poussereau N."/>
            <person name="Quesneville H."/>
            <person name="Rascle C."/>
            <person name="Schumacher J."/>
            <person name="Segurens B."/>
            <person name="Sexton A."/>
            <person name="Silva E."/>
            <person name="Sirven C."/>
            <person name="Soanes D.M."/>
            <person name="Talbot N.J."/>
            <person name="Templeton M."/>
            <person name="Yandava C."/>
            <person name="Yarden O."/>
            <person name="Zeng Q."/>
            <person name="Rollins J.A."/>
            <person name="Lebrun M.-H."/>
            <person name="Dickman M."/>
        </authorList>
    </citation>
    <scope>NUCLEOTIDE SEQUENCE [LARGE SCALE GENOMIC DNA]</scope>
    <source>
        <strain>ATCC 18683 / 1980 / Ss-1</strain>
    </source>
</reference>
<organism>
    <name type="scientific">Sclerotinia sclerotiorum (strain ATCC 18683 / 1980 / Ss-1)</name>
    <name type="common">White mold</name>
    <name type="synonym">Whetzelinia sclerotiorum</name>
    <dbReference type="NCBI Taxonomy" id="665079"/>
    <lineage>
        <taxon>Eukaryota</taxon>
        <taxon>Fungi</taxon>
        <taxon>Dikarya</taxon>
        <taxon>Ascomycota</taxon>
        <taxon>Pezizomycotina</taxon>
        <taxon>Leotiomycetes</taxon>
        <taxon>Helotiales</taxon>
        <taxon>Sclerotiniaceae</taxon>
        <taxon>Sclerotinia</taxon>
    </lineage>
</organism>
<protein>
    <recommendedName>
        <fullName evidence="2">Chromatin-remodeling ATPase INO80</fullName>
        <ecNumber evidence="2">3.6.4.-</ecNumber>
    </recommendedName>
</protein>
<dbReference type="EC" id="3.6.4.-" evidence="2"/>
<dbReference type="EMBL" id="CH476629">
    <property type="protein sequence ID" value="EDO05024.1"/>
    <property type="molecule type" value="Genomic_DNA"/>
</dbReference>
<dbReference type="RefSeq" id="XP_001592061.1">
    <property type="nucleotide sequence ID" value="XM_001592011.1"/>
</dbReference>
<dbReference type="SMR" id="A7EQA8"/>
<dbReference type="FunCoup" id="A7EQA8">
    <property type="interactions" value="1016"/>
</dbReference>
<dbReference type="STRING" id="665079.A7EQA8"/>
<dbReference type="EnsemblFungi" id="EDO05024">
    <property type="protein sequence ID" value="EDO05024"/>
    <property type="gene ID" value="SS1G_07509"/>
</dbReference>
<dbReference type="GeneID" id="5488199"/>
<dbReference type="KEGG" id="ssl:SS1G_07509"/>
<dbReference type="VEuPathDB" id="FungiDB:sscle_06g048760"/>
<dbReference type="eggNOG" id="KOG0388">
    <property type="taxonomic scope" value="Eukaryota"/>
</dbReference>
<dbReference type="HOGENOM" id="CLU_000315_26_0_1"/>
<dbReference type="InParanoid" id="A7EQA8"/>
<dbReference type="OMA" id="NLLGFHC"/>
<dbReference type="OrthoDB" id="372624at2759"/>
<dbReference type="Proteomes" id="UP000001312">
    <property type="component" value="Unassembled WGS sequence"/>
</dbReference>
<dbReference type="GO" id="GO:0000775">
    <property type="term" value="C:chromosome, centromeric region"/>
    <property type="evidence" value="ECO:0007669"/>
    <property type="project" value="EnsemblFungi"/>
</dbReference>
<dbReference type="GO" id="GO:0000781">
    <property type="term" value="C:chromosome, telomeric region"/>
    <property type="evidence" value="ECO:0007669"/>
    <property type="project" value="GOC"/>
</dbReference>
<dbReference type="GO" id="GO:0031011">
    <property type="term" value="C:Ino80 complex"/>
    <property type="evidence" value="ECO:0000318"/>
    <property type="project" value="GO_Central"/>
</dbReference>
<dbReference type="GO" id="GO:0005524">
    <property type="term" value="F:ATP binding"/>
    <property type="evidence" value="ECO:0007669"/>
    <property type="project" value="UniProtKB-KW"/>
</dbReference>
<dbReference type="GO" id="GO:0016887">
    <property type="term" value="F:ATP hydrolysis activity"/>
    <property type="evidence" value="ECO:0000318"/>
    <property type="project" value="GO_Central"/>
</dbReference>
<dbReference type="GO" id="GO:0140658">
    <property type="term" value="F:ATP-dependent chromatin remodeler activity"/>
    <property type="evidence" value="ECO:0007669"/>
    <property type="project" value="InterPro"/>
</dbReference>
<dbReference type="GO" id="GO:0003677">
    <property type="term" value="F:DNA binding"/>
    <property type="evidence" value="ECO:0007669"/>
    <property type="project" value="UniProtKB-KW"/>
</dbReference>
<dbReference type="GO" id="GO:0042393">
    <property type="term" value="F:histone binding"/>
    <property type="evidence" value="ECO:0000318"/>
    <property type="project" value="GO_Central"/>
</dbReference>
<dbReference type="GO" id="GO:0034080">
    <property type="term" value="P:CENP-A containing chromatin assembly"/>
    <property type="evidence" value="ECO:0007669"/>
    <property type="project" value="EnsemblFungi"/>
</dbReference>
<dbReference type="GO" id="GO:0006338">
    <property type="term" value="P:chromatin remodeling"/>
    <property type="evidence" value="ECO:0000318"/>
    <property type="project" value="GO_Central"/>
</dbReference>
<dbReference type="GO" id="GO:0006281">
    <property type="term" value="P:DNA repair"/>
    <property type="evidence" value="ECO:0000318"/>
    <property type="project" value="GO_Central"/>
</dbReference>
<dbReference type="GO" id="GO:0045944">
    <property type="term" value="P:positive regulation of transcription by RNA polymerase II"/>
    <property type="evidence" value="ECO:0007669"/>
    <property type="project" value="EnsemblFungi"/>
</dbReference>
<dbReference type="GO" id="GO:0032006">
    <property type="term" value="P:regulation of TOR signaling"/>
    <property type="evidence" value="ECO:0007669"/>
    <property type="project" value="EnsemblFungi"/>
</dbReference>
<dbReference type="GO" id="GO:0031509">
    <property type="term" value="P:subtelomeric heterochromatin formation"/>
    <property type="evidence" value="ECO:0007669"/>
    <property type="project" value="EnsemblFungi"/>
</dbReference>
<dbReference type="GO" id="GO:0000722">
    <property type="term" value="P:telomere maintenance via recombination"/>
    <property type="evidence" value="ECO:0007669"/>
    <property type="project" value="EnsemblFungi"/>
</dbReference>
<dbReference type="GO" id="GO:0006366">
    <property type="term" value="P:transcription by RNA polymerase II"/>
    <property type="evidence" value="ECO:0007669"/>
    <property type="project" value="EnsemblFungi"/>
</dbReference>
<dbReference type="CDD" id="cd18002">
    <property type="entry name" value="DEXQc_INO80"/>
    <property type="match status" value="1"/>
</dbReference>
<dbReference type="CDD" id="cd18793">
    <property type="entry name" value="SF2_C_SNF"/>
    <property type="match status" value="1"/>
</dbReference>
<dbReference type="FunFam" id="3.40.50.10810:FF:000006">
    <property type="entry name" value="Putative DNA helicase INO80"/>
    <property type="match status" value="1"/>
</dbReference>
<dbReference type="FunFam" id="3.40.50.300:FF:001269">
    <property type="entry name" value="SNF2 family helicase/ATPase"/>
    <property type="match status" value="1"/>
</dbReference>
<dbReference type="Gene3D" id="3.40.50.300">
    <property type="entry name" value="P-loop containing nucleotide triphosphate hydrolases"/>
    <property type="match status" value="1"/>
</dbReference>
<dbReference type="Gene3D" id="3.40.50.10810">
    <property type="entry name" value="Tandem AAA-ATPase domain"/>
    <property type="match status" value="1"/>
</dbReference>
<dbReference type="InterPro" id="IPR020838">
    <property type="entry name" value="DBINO"/>
</dbReference>
<dbReference type="InterPro" id="IPR031047">
    <property type="entry name" value="DEXQc_INO80"/>
</dbReference>
<dbReference type="InterPro" id="IPR014001">
    <property type="entry name" value="Helicase_ATP-bd"/>
</dbReference>
<dbReference type="InterPro" id="IPR001650">
    <property type="entry name" value="Helicase_C-like"/>
</dbReference>
<dbReference type="InterPro" id="IPR050520">
    <property type="entry name" value="INO80/SWR1_helicase"/>
</dbReference>
<dbReference type="InterPro" id="IPR027417">
    <property type="entry name" value="P-loop_NTPase"/>
</dbReference>
<dbReference type="InterPro" id="IPR038718">
    <property type="entry name" value="SNF2-like_sf"/>
</dbReference>
<dbReference type="InterPro" id="IPR049730">
    <property type="entry name" value="SNF2/RAD54-like_C"/>
</dbReference>
<dbReference type="InterPro" id="IPR000330">
    <property type="entry name" value="SNF2_N"/>
</dbReference>
<dbReference type="PANTHER" id="PTHR45685:SF2">
    <property type="entry name" value="CHROMATIN-REMODELING ATPASE INO80"/>
    <property type="match status" value="1"/>
</dbReference>
<dbReference type="PANTHER" id="PTHR45685">
    <property type="entry name" value="HELICASE SRCAP-RELATED"/>
    <property type="match status" value="1"/>
</dbReference>
<dbReference type="Pfam" id="PF13892">
    <property type="entry name" value="DBINO"/>
    <property type="match status" value="1"/>
</dbReference>
<dbReference type="Pfam" id="PF00271">
    <property type="entry name" value="Helicase_C"/>
    <property type="match status" value="1"/>
</dbReference>
<dbReference type="Pfam" id="PF00176">
    <property type="entry name" value="SNF2-rel_dom"/>
    <property type="match status" value="1"/>
</dbReference>
<dbReference type="SMART" id="SM00487">
    <property type="entry name" value="DEXDc"/>
    <property type="match status" value="1"/>
</dbReference>
<dbReference type="SMART" id="SM00490">
    <property type="entry name" value="HELICc"/>
    <property type="match status" value="1"/>
</dbReference>
<dbReference type="SUPFAM" id="SSF52540">
    <property type="entry name" value="P-loop containing nucleoside triphosphate hydrolases"/>
    <property type="match status" value="2"/>
</dbReference>
<dbReference type="PROSITE" id="PS51413">
    <property type="entry name" value="DBINO"/>
    <property type="match status" value="1"/>
</dbReference>
<dbReference type="PROSITE" id="PS51192">
    <property type="entry name" value="HELICASE_ATP_BIND_1"/>
    <property type="match status" value="1"/>
</dbReference>
<dbReference type="PROSITE" id="PS51194">
    <property type="entry name" value="HELICASE_CTER"/>
    <property type="match status" value="1"/>
</dbReference>